<protein>
    <recommendedName>
        <fullName evidence="7">F-box only protein 31</fullName>
    </recommendedName>
</protein>
<evidence type="ECO:0000250" key="1">
    <source>
        <dbReference type="UniProtKB" id="B2RYN2"/>
    </source>
</evidence>
<evidence type="ECO:0000250" key="2">
    <source>
        <dbReference type="UniProtKB" id="Q5XUX0"/>
    </source>
</evidence>
<evidence type="ECO:0000255" key="3">
    <source>
        <dbReference type="PROSITE-ProRule" id="PRU00080"/>
    </source>
</evidence>
<evidence type="ECO:0000256" key="4">
    <source>
        <dbReference type="SAM" id="MobiDB-lite"/>
    </source>
</evidence>
<evidence type="ECO:0000269" key="5">
    <source>
    </source>
</evidence>
<evidence type="ECO:0000303" key="6">
    <source>
    </source>
</evidence>
<evidence type="ECO:0000305" key="7"/>
<evidence type="ECO:0000312" key="8">
    <source>
        <dbReference type="MGI" id="MGI:1354708"/>
    </source>
</evidence>
<evidence type="ECO:0007744" key="9">
    <source>
    </source>
</evidence>
<evidence type="ECO:0007744" key="10">
    <source>
    </source>
</evidence>
<feature type="chain" id="PRO_0000349260" description="F-box only protein 31">
    <location>
        <begin position="1"/>
        <end position="507"/>
    </location>
</feature>
<feature type="domain" description="F-box" evidence="3">
    <location>
        <begin position="50"/>
        <end position="96"/>
    </location>
</feature>
<feature type="region of interest" description="Disordered" evidence="4">
    <location>
        <begin position="19"/>
        <end position="42"/>
    </location>
</feature>
<feature type="region of interest" description="Disordered" evidence="4">
    <location>
        <begin position="366"/>
        <end position="417"/>
    </location>
</feature>
<feature type="short sequence motif" description="D box" evidence="2">
    <location>
        <begin position="50"/>
        <end position="55"/>
    </location>
</feature>
<feature type="short sequence motif" description="DDL motif" evidence="2">
    <location>
        <begin position="283"/>
        <end position="285"/>
    </location>
</feature>
<feature type="compositionally biased region" description="Acidic residues" evidence="4">
    <location>
        <begin position="33"/>
        <end position="42"/>
    </location>
</feature>
<feature type="compositionally biased region" description="Low complexity" evidence="4">
    <location>
        <begin position="400"/>
        <end position="412"/>
    </location>
</feature>
<feature type="binding site" evidence="2">
    <location>
        <position position="192"/>
    </location>
    <ligand>
        <name>Zn(2+)</name>
        <dbReference type="ChEBI" id="CHEBI:29105"/>
    </ligand>
</feature>
<feature type="binding site" evidence="2">
    <location>
        <position position="200"/>
    </location>
    <ligand>
        <name>Zn(2+)</name>
        <dbReference type="ChEBI" id="CHEBI:29105"/>
    </ligand>
</feature>
<feature type="binding site" evidence="2">
    <location>
        <position position="216"/>
    </location>
    <ligand>
        <name>Zn(2+)</name>
        <dbReference type="ChEBI" id="CHEBI:29105"/>
    </ligand>
</feature>
<feature type="binding site" evidence="2">
    <location>
        <position position="222"/>
    </location>
    <ligand>
        <name>Zn(2+)</name>
        <dbReference type="ChEBI" id="CHEBI:29105"/>
    </ligand>
</feature>
<feature type="modified residue" description="Phosphoserine" evidence="9 10">
    <location>
        <position position="33"/>
    </location>
</feature>
<feature type="modified residue" description="Phosphothreonine" evidence="9 10">
    <location>
        <position position="37"/>
    </location>
</feature>
<feature type="modified residue" description="Phosphoserine; by ATM" evidence="2">
    <location>
        <position position="264"/>
    </location>
</feature>
<feature type="modified residue" description="Phosphoserine" evidence="2">
    <location>
        <position position="448"/>
    </location>
</feature>
<feature type="sequence conflict" description="In Ref. 2; AAH26929." evidence="7" ref="2">
    <original>V</original>
    <variation>L</variation>
    <location>
        <position position="207"/>
    </location>
</feature>
<feature type="sequence conflict" description="In Ref. 3; BAA95069." evidence="7" ref="3">
    <original>R</original>
    <variation>W</variation>
    <location>
        <position position="313"/>
    </location>
</feature>
<name>FBX31_MOUSE</name>
<keyword id="KW-0131">Cell cycle</keyword>
<keyword id="KW-0963">Cytoplasm</keyword>
<keyword id="KW-0206">Cytoskeleton</keyword>
<keyword id="KW-0227">DNA damage</keyword>
<keyword id="KW-0479">Metal-binding</keyword>
<keyword id="KW-0597">Phosphoprotein</keyword>
<keyword id="KW-1185">Reference proteome</keyword>
<keyword id="KW-0832">Ubl conjugation</keyword>
<keyword id="KW-0833">Ubl conjugation pathway</keyword>
<keyword id="KW-0862">Zinc</keyword>
<comment type="function">
    <text evidence="2 5">Substrate-recognition component of the SCF(FBXO31) protein ligase complex, which specifically mediates the ubiquitination of proteins amidated at their C-terminus in response to oxidative stress, leading to their degradation by the proteasome (By similarity). FBXO31 specifically recognizes and binds C-terminal peptides bearing an amide: C-terminal amidation in response to oxidative stress takes place following protein fragmentation (By similarity). The SCF(FBXO31) also plays a role in G1 arrest following DNA damage by mediating ubiquitination of phosphorylated cyclin-D1 (CCND1), promoting its degradation by the proteasome, resulting in G1 arrest (By similarity). The SCF(FBXO31) complex is however not a major regulator of CCND1 stability during the G1/S transition (PubMed:22124152). In response to genotoxic stress, the SCF(FBXO31) complex directs ubiquitination and degradation of phosphorylated MDM2, thereby promoting p53/TP53-mediated DNA damage response (By similarity). SCF(FBXO31) complex is required for genomic integrity by catalyzing ubiquitination and degradation of cyclin-A (CCNA1 and/or CCNA2) during the G1 phase (By similarity). In response to genotoxic stress, the SCF(FBXO31) complex directs ubiquitination and degradation of phosphorylated FBXO46 and MAP2K6 (By similarity). SCF(FBXO31) complex promotes ubiquitination and degradation of CDT1 during the G2 phase to prevent re-replication (By similarity). The SCF(FBXO31) complex also mediates ubiquitination and degradation of DUSP6, OGT and PARD6A (By similarity).</text>
</comment>
<comment type="pathway">
    <text evidence="2">Protein modification; protein ubiquitination.</text>
</comment>
<comment type="subunit">
    <text evidence="2">Part of a SCF (SKP1-cullin-F-box) protein ligase complex SCF(FBXO31) composed of CUL1, SKP1, RBX1 and FBXO31. Interacts (when phosphorylated at Ser-33) with CDC20, promoting ubiquitination by the APC/C complex.</text>
</comment>
<comment type="subcellular location">
    <subcellularLocation>
        <location evidence="2">Cytoplasm</location>
    </subcellularLocation>
    <subcellularLocation>
        <location evidence="1">Cytoplasm</location>
        <location evidence="1">Cytoskeleton</location>
        <location evidence="1">Microtubule organizing center</location>
        <location evidence="1">Centrosome</location>
    </subcellularLocation>
</comment>
<comment type="domain">
    <text evidence="2">Zinc-binding is required for the structure of the protein and facilitate folding.</text>
</comment>
<comment type="domain">
    <text evidence="2">The destruction box (D box) acts as a recognition signal for CDC20 for degradation by the APC/C complex.</text>
</comment>
<comment type="domain">
    <text evidence="2">The DDL motif is required for the interation with cyclin-A (CCNA1 and/or CCNA2).</text>
</comment>
<comment type="PTM">
    <text evidence="2">Phosphorylation at Ser-264 by ATM following gamma-irradiation results in its stabilization. Phosphorylation at Ser-448 in absence of stress promotes its ubiquitination and degradation by the SCF(FBXO46) complex. Phosphorylation at Ser-33 by AKT1 promotes association with CDC20 and ubiquitination by the APC/C complex.</text>
</comment>
<comment type="PTM">
    <text evidence="2">Ubiquitinated by the SCF(FBXO46) complex in absence of stress, promoting its degradation. Ubiquitinated by the APC/C complex following phosphorylation at Ser-33, leading to its degradation by the proteasome.</text>
</comment>
<comment type="similarity">
    <text evidence="7">Belongs to the FBXO31 family.</text>
</comment>
<comment type="sequence caution" evidence="7">
    <conflict type="erroneous initiation">
        <sequence resource="EMBL-CDS" id="AAH26929"/>
    </conflict>
</comment>
<comment type="sequence caution" evidence="7">
    <conflict type="erroneous initiation">
        <sequence resource="EMBL-CDS" id="BAA95069"/>
    </conflict>
</comment>
<gene>
    <name evidence="6 8" type="primary">Fbxo31</name>
    <name type="ORF">MNCb-2609</name>
</gene>
<organism>
    <name type="scientific">Mus musculus</name>
    <name type="common">Mouse</name>
    <dbReference type="NCBI Taxonomy" id="10090"/>
    <lineage>
        <taxon>Eukaryota</taxon>
        <taxon>Metazoa</taxon>
        <taxon>Chordata</taxon>
        <taxon>Craniata</taxon>
        <taxon>Vertebrata</taxon>
        <taxon>Euteleostomi</taxon>
        <taxon>Mammalia</taxon>
        <taxon>Eutheria</taxon>
        <taxon>Euarchontoglires</taxon>
        <taxon>Glires</taxon>
        <taxon>Rodentia</taxon>
        <taxon>Myomorpha</taxon>
        <taxon>Muroidea</taxon>
        <taxon>Muridae</taxon>
        <taxon>Murinae</taxon>
        <taxon>Mus</taxon>
        <taxon>Mus</taxon>
    </lineage>
</organism>
<proteinExistence type="evidence at protein level"/>
<sequence>MAVCARLCGVGPARGCRRRQQRRGPAETAAADSEADTDPEEERIEAGPARCSLLELPPELLVEIFASLPGTDLPSLAQVCSRFRRILHTDTIWRRRCREEYGVCENLRKLEITGVSCRDVYAKLLHRYRHILGLWQPDIGPYGGLLNVVVDGLFIIGWMYLPPHDPHVGDPMRFKPLFRIHLMERKSATVECMYGHKGPHNGHIQIVKRDEFSTKCNQTDHHRMSGGRQEEFRTWLREEWGRTLEDIFHEHMQELILMKFIYTSQYDNCLTYRRIYLPPSHPDDLIKPGLFKGTYGSHGLEIVMLSFHGSRARGTKITGDPNIPAGQQTVEIDLQRRIQLPDVENLRNFNELSRIVLEVREQVRQEQEAGEGAAPPREPSAKAADGPPAKDGKEPGGGAEAAEQSASSGQGQPFVLPVGVSSRNEDYPRTCRLCFYGTGLIAGHGFTSPERTPGVFVLFDEDRFGFLWLELKSFSLYSRVQATFQNAAAPSPQAFDEMLRNIQSLTS</sequence>
<dbReference type="EMBL" id="AK163641">
    <property type="protein sequence ID" value="BAE37434.1"/>
    <property type="molecule type" value="mRNA"/>
</dbReference>
<dbReference type="EMBL" id="BC026929">
    <property type="protein sequence ID" value="AAH26929.1"/>
    <property type="status" value="ALT_INIT"/>
    <property type="molecule type" value="mRNA"/>
</dbReference>
<dbReference type="EMBL" id="AB041586">
    <property type="protein sequence ID" value="BAA95069.1"/>
    <property type="status" value="ALT_INIT"/>
    <property type="molecule type" value="mRNA"/>
</dbReference>
<dbReference type="CCDS" id="CCDS52693.1"/>
<dbReference type="RefSeq" id="NP_598526.3">
    <property type="nucleotide sequence ID" value="NM_133765.4"/>
</dbReference>
<dbReference type="SMR" id="Q3TQF0"/>
<dbReference type="BioGRID" id="218134">
    <property type="interactions" value="1"/>
</dbReference>
<dbReference type="FunCoup" id="Q3TQF0">
    <property type="interactions" value="34"/>
</dbReference>
<dbReference type="STRING" id="10090.ENSMUSP00000057573"/>
<dbReference type="iPTMnet" id="Q3TQF0"/>
<dbReference type="PhosphoSitePlus" id="Q3TQF0"/>
<dbReference type="PaxDb" id="10090-ENSMUSP00000057573"/>
<dbReference type="ProteomicsDB" id="271673"/>
<dbReference type="Antibodypedia" id="30677">
    <property type="antibodies" value="242 antibodies from 24 providers"/>
</dbReference>
<dbReference type="DNASU" id="76454"/>
<dbReference type="Ensembl" id="ENSMUST00000059018.14">
    <property type="protein sequence ID" value="ENSMUSP00000057573.6"/>
    <property type="gene ID" value="ENSMUSG00000052934.15"/>
</dbReference>
<dbReference type="GeneID" id="76454"/>
<dbReference type="KEGG" id="mmu:76454"/>
<dbReference type="UCSC" id="uc009nrv.3">
    <property type="organism name" value="mouse"/>
</dbReference>
<dbReference type="AGR" id="MGI:1354708"/>
<dbReference type="CTD" id="79791"/>
<dbReference type="MGI" id="MGI:1354708">
    <property type="gene designation" value="Fbxo31"/>
</dbReference>
<dbReference type="VEuPathDB" id="HostDB:ENSMUSG00000052934"/>
<dbReference type="eggNOG" id="ENOG502QR2A">
    <property type="taxonomic scope" value="Eukaryota"/>
</dbReference>
<dbReference type="GeneTree" id="ENSGT00390000001368"/>
<dbReference type="HOGENOM" id="CLU_035961_0_0_1"/>
<dbReference type="InParanoid" id="Q3TQF0"/>
<dbReference type="OMA" id="CCKPEKH"/>
<dbReference type="OrthoDB" id="722566at2759"/>
<dbReference type="PhylomeDB" id="Q3TQF0"/>
<dbReference type="TreeFam" id="TF331818"/>
<dbReference type="Reactome" id="R-MMU-8951664">
    <property type="pathway name" value="Neddylation"/>
</dbReference>
<dbReference type="Reactome" id="R-MMU-983168">
    <property type="pathway name" value="Antigen processing: Ubiquitination &amp; Proteasome degradation"/>
</dbReference>
<dbReference type="UniPathway" id="UPA00143"/>
<dbReference type="BioGRID-ORCS" id="76454">
    <property type="hits" value="4 hits in 77 CRISPR screens"/>
</dbReference>
<dbReference type="ChiTaRS" id="Fbxo31">
    <property type="organism name" value="mouse"/>
</dbReference>
<dbReference type="PRO" id="PR:Q3TQF0"/>
<dbReference type="Proteomes" id="UP000000589">
    <property type="component" value="Chromosome 8"/>
</dbReference>
<dbReference type="RNAct" id="Q3TQF0">
    <property type="molecule type" value="protein"/>
</dbReference>
<dbReference type="Bgee" id="ENSMUSG00000052934">
    <property type="expression patterns" value="Expressed in hindlimb stylopod muscle and 218 other cell types or tissues"/>
</dbReference>
<dbReference type="ExpressionAtlas" id="Q3TQF0">
    <property type="expression patterns" value="baseline and differential"/>
</dbReference>
<dbReference type="GO" id="GO:0005737">
    <property type="term" value="C:cytoplasm"/>
    <property type="evidence" value="ECO:0000250"/>
    <property type="project" value="UniProtKB"/>
</dbReference>
<dbReference type="GO" id="GO:0043025">
    <property type="term" value="C:neuronal cell body"/>
    <property type="evidence" value="ECO:0000314"/>
    <property type="project" value="UniProtKB"/>
</dbReference>
<dbReference type="GO" id="GO:0019005">
    <property type="term" value="C:SCF ubiquitin ligase complex"/>
    <property type="evidence" value="ECO:0000250"/>
    <property type="project" value="UniProtKB"/>
</dbReference>
<dbReference type="GO" id="GO:0030332">
    <property type="term" value="F:cyclin binding"/>
    <property type="evidence" value="ECO:0007669"/>
    <property type="project" value="Ensembl"/>
</dbReference>
<dbReference type="GO" id="GO:1990756">
    <property type="term" value="F:ubiquitin-like ligase-substrate adaptor activity"/>
    <property type="evidence" value="ECO:0000250"/>
    <property type="project" value="UniProtKB"/>
</dbReference>
<dbReference type="GO" id="GO:0031145">
    <property type="term" value="P:anaphase-promoting complex-dependent catabolic process"/>
    <property type="evidence" value="ECO:0000250"/>
    <property type="project" value="UniProtKB"/>
</dbReference>
<dbReference type="GO" id="GO:0034599">
    <property type="term" value="P:cellular response to oxidative stress"/>
    <property type="evidence" value="ECO:0000250"/>
    <property type="project" value="UniProtKB"/>
</dbReference>
<dbReference type="GO" id="GO:0006974">
    <property type="term" value="P:DNA damage response"/>
    <property type="evidence" value="ECO:0000250"/>
    <property type="project" value="UniProtKB"/>
</dbReference>
<dbReference type="GO" id="GO:0031571">
    <property type="term" value="P:mitotic G1 DNA damage checkpoint signaling"/>
    <property type="evidence" value="ECO:0000250"/>
    <property type="project" value="UniProtKB"/>
</dbReference>
<dbReference type="GO" id="GO:0043161">
    <property type="term" value="P:proteasome-mediated ubiquitin-dependent protein catabolic process"/>
    <property type="evidence" value="ECO:0000250"/>
    <property type="project" value="UniProtKB"/>
</dbReference>
<dbReference type="GO" id="GO:0016567">
    <property type="term" value="P:protein ubiquitination"/>
    <property type="evidence" value="ECO:0007669"/>
    <property type="project" value="UniProtKB-UniPathway"/>
</dbReference>
<dbReference type="GO" id="GO:0031146">
    <property type="term" value="P:SCF-dependent proteasomal ubiquitin-dependent protein catabolic process"/>
    <property type="evidence" value="ECO:0000250"/>
    <property type="project" value="UniProtKB"/>
</dbReference>
<dbReference type="FunFam" id="1.20.1280.50:FF:000033">
    <property type="entry name" value="F-box only protein 31"/>
    <property type="match status" value="1"/>
</dbReference>
<dbReference type="Gene3D" id="1.20.1280.50">
    <property type="match status" value="1"/>
</dbReference>
<dbReference type="InterPro" id="IPR036047">
    <property type="entry name" value="F-box-like_dom_sf"/>
</dbReference>
<dbReference type="InterPro" id="IPR001810">
    <property type="entry name" value="F-box_dom"/>
</dbReference>
<dbReference type="InterPro" id="IPR045048">
    <property type="entry name" value="FBXO31/39"/>
</dbReference>
<dbReference type="PANTHER" id="PTHR10706">
    <property type="entry name" value="F-BOX FAMILY PROTEIN"/>
    <property type="match status" value="1"/>
</dbReference>
<dbReference type="PANTHER" id="PTHR10706:SF130">
    <property type="entry name" value="F-BOX ONLY PROTEIN 31"/>
    <property type="match status" value="1"/>
</dbReference>
<dbReference type="Pfam" id="PF12014">
    <property type="entry name" value="Cyclin_D1_bind"/>
    <property type="match status" value="1"/>
</dbReference>
<dbReference type="Pfam" id="PF12937">
    <property type="entry name" value="F-box-like"/>
    <property type="match status" value="1"/>
</dbReference>
<dbReference type="SMART" id="SM00256">
    <property type="entry name" value="FBOX"/>
    <property type="match status" value="1"/>
</dbReference>
<dbReference type="SUPFAM" id="SSF81383">
    <property type="entry name" value="F-box domain"/>
    <property type="match status" value="1"/>
</dbReference>
<dbReference type="PROSITE" id="PS50181">
    <property type="entry name" value="FBOX"/>
    <property type="match status" value="1"/>
</dbReference>
<accession>Q3TQF0</accession>
<accession>Q8K1A7</accession>
<accession>Q9JJC4</accession>
<reference key="1">
    <citation type="journal article" date="2005" name="Science">
        <title>The transcriptional landscape of the mammalian genome.</title>
        <authorList>
            <person name="Carninci P."/>
            <person name="Kasukawa T."/>
            <person name="Katayama S."/>
            <person name="Gough J."/>
            <person name="Frith M.C."/>
            <person name="Maeda N."/>
            <person name="Oyama R."/>
            <person name="Ravasi T."/>
            <person name="Lenhard B."/>
            <person name="Wells C."/>
            <person name="Kodzius R."/>
            <person name="Shimokawa K."/>
            <person name="Bajic V.B."/>
            <person name="Brenner S.E."/>
            <person name="Batalov S."/>
            <person name="Forrest A.R."/>
            <person name="Zavolan M."/>
            <person name="Davis M.J."/>
            <person name="Wilming L.G."/>
            <person name="Aidinis V."/>
            <person name="Allen J.E."/>
            <person name="Ambesi-Impiombato A."/>
            <person name="Apweiler R."/>
            <person name="Aturaliya R.N."/>
            <person name="Bailey T.L."/>
            <person name="Bansal M."/>
            <person name="Baxter L."/>
            <person name="Beisel K.W."/>
            <person name="Bersano T."/>
            <person name="Bono H."/>
            <person name="Chalk A.M."/>
            <person name="Chiu K.P."/>
            <person name="Choudhary V."/>
            <person name="Christoffels A."/>
            <person name="Clutterbuck D.R."/>
            <person name="Crowe M.L."/>
            <person name="Dalla E."/>
            <person name="Dalrymple B.P."/>
            <person name="de Bono B."/>
            <person name="Della Gatta G."/>
            <person name="di Bernardo D."/>
            <person name="Down T."/>
            <person name="Engstrom P."/>
            <person name="Fagiolini M."/>
            <person name="Faulkner G."/>
            <person name="Fletcher C.F."/>
            <person name="Fukushima T."/>
            <person name="Furuno M."/>
            <person name="Futaki S."/>
            <person name="Gariboldi M."/>
            <person name="Georgii-Hemming P."/>
            <person name="Gingeras T.R."/>
            <person name="Gojobori T."/>
            <person name="Green R.E."/>
            <person name="Gustincich S."/>
            <person name="Harbers M."/>
            <person name="Hayashi Y."/>
            <person name="Hensch T.K."/>
            <person name="Hirokawa N."/>
            <person name="Hill D."/>
            <person name="Huminiecki L."/>
            <person name="Iacono M."/>
            <person name="Ikeo K."/>
            <person name="Iwama A."/>
            <person name="Ishikawa T."/>
            <person name="Jakt M."/>
            <person name="Kanapin A."/>
            <person name="Katoh M."/>
            <person name="Kawasawa Y."/>
            <person name="Kelso J."/>
            <person name="Kitamura H."/>
            <person name="Kitano H."/>
            <person name="Kollias G."/>
            <person name="Krishnan S.P."/>
            <person name="Kruger A."/>
            <person name="Kummerfeld S.K."/>
            <person name="Kurochkin I.V."/>
            <person name="Lareau L.F."/>
            <person name="Lazarevic D."/>
            <person name="Lipovich L."/>
            <person name="Liu J."/>
            <person name="Liuni S."/>
            <person name="McWilliam S."/>
            <person name="Madan Babu M."/>
            <person name="Madera M."/>
            <person name="Marchionni L."/>
            <person name="Matsuda H."/>
            <person name="Matsuzawa S."/>
            <person name="Miki H."/>
            <person name="Mignone F."/>
            <person name="Miyake S."/>
            <person name="Morris K."/>
            <person name="Mottagui-Tabar S."/>
            <person name="Mulder N."/>
            <person name="Nakano N."/>
            <person name="Nakauchi H."/>
            <person name="Ng P."/>
            <person name="Nilsson R."/>
            <person name="Nishiguchi S."/>
            <person name="Nishikawa S."/>
            <person name="Nori F."/>
            <person name="Ohara O."/>
            <person name="Okazaki Y."/>
            <person name="Orlando V."/>
            <person name="Pang K.C."/>
            <person name="Pavan W.J."/>
            <person name="Pavesi G."/>
            <person name="Pesole G."/>
            <person name="Petrovsky N."/>
            <person name="Piazza S."/>
            <person name="Reed J."/>
            <person name="Reid J.F."/>
            <person name="Ring B.Z."/>
            <person name="Ringwald M."/>
            <person name="Rost B."/>
            <person name="Ruan Y."/>
            <person name="Salzberg S.L."/>
            <person name="Sandelin A."/>
            <person name="Schneider C."/>
            <person name="Schoenbach C."/>
            <person name="Sekiguchi K."/>
            <person name="Semple C.A."/>
            <person name="Seno S."/>
            <person name="Sessa L."/>
            <person name="Sheng Y."/>
            <person name="Shibata Y."/>
            <person name="Shimada H."/>
            <person name="Shimada K."/>
            <person name="Silva D."/>
            <person name="Sinclair B."/>
            <person name="Sperling S."/>
            <person name="Stupka E."/>
            <person name="Sugiura K."/>
            <person name="Sultana R."/>
            <person name="Takenaka Y."/>
            <person name="Taki K."/>
            <person name="Tammoja K."/>
            <person name="Tan S.L."/>
            <person name="Tang S."/>
            <person name="Taylor M.S."/>
            <person name="Tegner J."/>
            <person name="Teichmann S.A."/>
            <person name="Ueda H.R."/>
            <person name="van Nimwegen E."/>
            <person name="Verardo R."/>
            <person name="Wei C.L."/>
            <person name="Yagi K."/>
            <person name="Yamanishi H."/>
            <person name="Zabarovsky E."/>
            <person name="Zhu S."/>
            <person name="Zimmer A."/>
            <person name="Hide W."/>
            <person name="Bult C."/>
            <person name="Grimmond S.M."/>
            <person name="Teasdale R.D."/>
            <person name="Liu E.T."/>
            <person name="Brusic V."/>
            <person name="Quackenbush J."/>
            <person name="Wahlestedt C."/>
            <person name="Mattick J.S."/>
            <person name="Hume D.A."/>
            <person name="Kai C."/>
            <person name="Sasaki D."/>
            <person name="Tomaru Y."/>
            <person name="Fukuda S."/>
            <person name="Kanamori-Katayama M."/>
            <person name="Suzuki M."/>
            <person name="Aoki J."/>
            <person name="Arakawa T."/>
            <person name="Iida J."/>
            <person name="Imamura K."/>
            <person name="Itoh M."/>
            <person name="Kato T."/>
            <person name="Kawaji H."/>
            <person name="Kawagashira N."/>
            <person name="Kawashima T."/>
            <person name="Kojima M."/>
            <person name="Kondo S."/>
            <person name="Konno H."/>
            <person name="Nakano K."/>
            <person name="Ninomiya N."/>
            <person name="Nishio T."/>
            <person name="Okada M."/>
            <person name="Plessy C."/>
            <person name="Shibata K."/>
            <person name="Shiraki T."/>
            <person name="Suzuki S."/>
            <person name="Tagami M."/>
            <person name="Waki K."/>
            <person name="Watahiki A."/>
            <person name="Okamura-Oho Y."/>
            <person name="Suzuki H."/>
            <person name="Kawai J."/>
            <person name="Hayashizaki Y."/>
        </authorList>
    </citation>
    <scope>NUCLEOTIDE SEQUENCE [LARGE SCALE MRNA]</scope>
    <source>
        <strain>C57BL/6J</strain>
        <tissue>Medulla oblongata</tissue>
    </source>
</reference>
<reference key="2">
    <citation type="journal article" date="2004" name="Genome Res.">
        <title>The status, quality, and expansion of the NIH full-length cDNA project: the Mammalian Gene Collection (MGC).</title>
        <authorList>
            <consortium name="The MGC Project Team"/>
        </authorList>
    </citation>
    <scope>NUCLEOTIDE SEQUENCE [LARGE SCALE MRNA]</scope>
    <source>
        <strain>FVB/N</strain>
        <tissue>Liver</tissue>
    </source>
</reference>
<reference key="3">
    <citation type="submission" date="2000-04" db="EMBL/GenBank/DDBJ databases">
        <title>Isolation of full-length cDNA clones from mouse brain cDNA library made by oligo-capping method.</title>
        <authorList>
            <person name="Osada N."/>
            <person name="Kusuda J."/>
            <person name="Tanuma R."/>
            <person name="Ito A."/>
            <person name="Hirata M."/>
            <person name="Sugano S."/>
            <person name="Hashimoto K."/>
        </authorList>
    </citation>
    <scope>NUCLEOTIDE SEQUENCE [LARGE SCALE MRNA] OF 35-507</scope>
    <source>
        <strain>C57BL/6J</strain>
        <tissue>Brain</tissue>
    </source>
</reference>
<reference key="4">
    <citation type="journal article" date="2007" name="Proc. Natl. Acad. Sci. U.S.A.">
        <title>Large-scale phosphorylation analysis of mouse liver.</title>
        <authorList>
            <person name="Villen J."/>
            <person name="Beausoleil S.A."/>
            <person name="Gerber S.A."/>
            <person name="Gygi S.P."/>
        </authorList>
    </citation>
    <scope>PHOSPHORYLATION [LARGE SCALE ANALYSIS] AT SER-33 AND THR-37</scope>
    <scope>IDENTIFICATION BY MASS SPECTROMETRY [LARGE SCALE ANALYSIS]</scope>
    <source>
        <tissue>Liver</tissue>
    </source>
</reference>
<reference key="5">
    <citation type="journal article" date="2010" name="Cell">
        <title>A tissue-specific atlas of mouse protein phosphorylation and expression.</title>
        <authorList>
            <person name="Huttlin E.L."/>
            <person name="Jedrychowski M.P."/>
            <person name="Elias J.E."/>
            <person name="Goswami T."/>
            <person name="Rad R."/>
            <person name="Beausoleil S.A."/>
            <person name="Villen J."/>
            <person name="Haas W."/>
            <person name="Sowa M.E."/>
            <person name="Gygi S.P."/>
        </authorList>
    </citation>
    <scope>PHOSPHORYLATION [LARGE SCALE ANALYSIS] AT SER-33 AND THR-37</scope>
    <scope>IDENTIFICATION BY MASS SPECTROMETRY [LARGE SCALE ANALYSIS]</scope>
    <source>
        <tissue>Brain</tissue>
    </source>
</reference>
<reference key="6">
    <citation type="journal article" date="2012" name="Mol. Cell. Biol.">
        <title>Genetic reevaluation of the role of F-box proteins in cyclin D1 degradation.</title>
        <authorList>
            <person name="Kanie T."/>
            <person name="Onoyama I."/>
            <person name="Matsumoto A."/>
            <person name="Yamada M."/>
            <person name="Nakatsumi H."/>
            <person name="Tateishi Y."/>
            <person name="Yamamura S."/>
            <person name="Tsunematsu R."/>
            <person name="Matsumoto M."/>
            <person name="Nakayama K.I."/>
        </authorList>
    </citation>
    <scope>FUNCTION</scope>
</reference>